<keyword id="KW-0963">Cytoplasm</keyword>
<keyword id="KW-0275">Fatty acid biosynthesis</keyword>
<keyword id="KW-0276">Fatty acid metabolism</keyword>
<keyword id="KW-0413">Isomerase</keyword>
<keyword id="KW-0444">Lipid biosynthesis</keyword>
<keyword id="KW-0443">Lipid metabolism</keyword>
<keyword id="KW-0456">Lyase</keyword>
<protein>
    <recommendedName>
        <fullName evidence="1">3-hydroxydecanoyl-[acyl-carrier-protein] dehydratase</fullName>
        <ecNumber evidence="1">4.2.1.59</ecNumber>
    </recommendedName>
    <alternativeName>
        <fullName evidence="1">3-hydroxyacyl-[acyl-carrier-protein] dehydratase FabA</fullName>
    </alternativeName>
    <alternativeName>
        <fullName evidence="1">Beta-hydroxydecanoyl thioester dehydrase</fullName>
    </alternativeName>
    <alternativeName>
        <fullName evidence="1">Trans-2-decenoyl-[acyl-carrier-protein] isomerase</fullName>
        <ecNumber evidence="1">5.3.3.14</ecNumber>
    </alternativeName>
</protein>
<name>FABA_VIBCM</name>
<dbReference type="EC" id="4.2.1.59" evidence="1"/>
<dbReference type="EC" id="5.3.3.14" evidence="1"/>
<dbReference type="EMBL" id="CP001233">
    <property type="protein sequence ID" value="ACP05742.1"/>
    <property type="molecule type" value="Genomic_DNA"/>
</dbReference>
<dbReference type="RefSeq" id="WP_001180252.1">
    <property type="nucleotide sequence ID" value="NC_012578.1"/>
</dbReference>
<dbReference type="SMR" id="C3LMG6"/>
<dbReference type="GeneID" id="69719873"/>
<dbReference type="KEGG" id="vcm:VCM66_1426"/>
<dbReference type="HOGENOM" id="CLU_097925_0_0_6"/>
<dbReference type="UniPathway" id="UPA00094"/>
<dbReference type="Proteomes" id="UP000001217">
    <property type="component" value="Chromosome I"/>
</dbReference>
<dbReference type="GO" id="GO:0005737">
    <property type="term" value="C:cytoplasm"/>
    <property type="evidence" value="ECO:0007669"/>
    <property type="project" value="UniProtKB-SubCell"/>
</dbReference>
<dbReference type="GO" id="GO:0019171">
    <property type="term" value="F:(3R)-hydroxyacyl-[acyl-carrier-protein] dehydratase activity"/>
    <property type="evidence" value="ECO:0007669"/>
    <property type="project" value="UniProtKB-UniRule"/>
</dbReference>
<dbReference type="GO" id="GO:0034017">
    <property type="term" value="F:trans-2-decenoyl-acyl-carrier-protein isomerase activity"/>
    <property type="evidence" value="ECO:0007669"/>
    <property type="project" value="UniProtKB-UniRule"/>
</dbReference>
<dbReference type="GO" id="GO:0006636">
    <property type="term" value="P:unsaturated fatty acid biosynthetic process"/>
    <property type="evidence" value="ECO:0007669"/>
    <property type="project" value="UniProtKB-UniRule"/>
</dbReference>
<dbReference type="CDD" id="cd01287">
    <property type="entry name" value="FabA"/>
    <property type="match status" value="1"/>
</dbReference>
<dbReference type="FunFam" id="3.10.129.10:FF:000003">
    <property type="entry name" value="3-hydroxydecanoyl-[acyl-carrier-protein] dehydratase"/>
    <property type="match status" value="1"/>
</dbReference>
<dbReference type="Gene3D" id="3.10.129.10">
    <property type="entry name" value="Hotdog Thioesterase"/>
    <property type="match status" value="1"/>
</dbReference>
<dbReference type="HAMAP" id="MF_00405">
    <property type="entry name" value="FabA"/>
    <property type="match status" value="1"/>
</dbReference>
<dbReference type="InterPro" id="IPR010083">
    <property type="entry name" value="FabA"/>
</dbReference>
<dbReference type="InterPro" id="IPR013114">
    <property type="entry name" value="FabA_FabZ"/>
</dbReference>
<dbReference type="InterPro" id="IPR029069">
    <property type="entry name" value="HotDog_dom_sf"/>
</dbReference>
<dbReference type="NCBIfam" id="TIGR01749">
    <property type="entry name" value="fabA"/>
    <property type="match status" value="1"/>
</dbReference>
<dbReference type="NCBIfam" id="NF003509">
    <property type="entry name" value="PRK05174.1"/>
    <property type="match status" value="1"/>
</dbReference>
<dbReference type="PANTHER" id="PTHR30272">
    <property type="entry name" value="3-HYDROXYACYL-[ACYL-CARRIER-PROTEIN] DEHYDRATASE"/>
    <property type="match status" value="1"/>
</dbReference>
<dbReference type="PANTHER" id="PTHR30272:SF8">
    <property type="entry name" value="3-HYDROXYDECANOYL-[ACYL-CARRIER-PROTEIN] DEHYDRATASE"/>
    <property type="match status" value="1"/>
</dbReference>
<dbReference type="Pfam" id="PF07977">
    <property type="entry name" value="FabA"/>
    <property type="match status" value="1"/>
</dbReference>
<dbReference type="SUPFAM" id="SSF54637">
    <property type="entry name" value="Thioesterase/thiol ester dehydrase-isomerase"/>
    <property type="match status" value="1"/>
</dbReference>
<proteinExistence type="inferred from homology"/>
<organism>
    <name type="scientific">Vibrio cholerae serotype O1 (strain M66-2)</name>
    <dbReference type="NCBI Taxonomy" id="579112"/>
    <lineage>
        <taxon>Bacteria</taxon>
        <taxon>Pseudomonadati</taxon>
        <taxon>Pseudomonadota</taxon>
        <taxon>Gammaproteobacteria</taxon>
        <taxon>Vibrionales</taxon>
        <taxon>Vibrionaceae</taxon>
        <taxon>Vibrio</taxon>
    </lineage>
</organism>
<accession>C3LMG6</accession>
<gene>
    <name evidence="1" type="primary">fabA</name>
    <name type="ordered locus">VCM66_1426</name>
</gene>
<feature type="chain" id="PRO_1000201224" description="3-hydroxydecanoyl-[acyl-carrier-protein] dehydratase">
    <location>
        <begin position="1"/>
        <end position="172"/>
    </location>
</feature>
<feature type="active site" evidence="1">
    <location>
        <position position="71"/>
    </location>
</feature>
<evidence type="ECO:0000255" key="1">
    <source>
        <dbReference type="HAMAP-Rule" id="MF_00405"/>
    </source>
</evidence>
<sequence>MQNKRDSYNREDLLASSQGELFGEGYPQLPAPNMLMMDRITKMSETEGEFGKGLILAELDITPDLWFFDCHFPGDPVMPGCLGLDAMWQLVGFFLGWVGGKGKGRALGVGEVKFTGQILPTAKKVTYEINMKRVVNRKLVMGLADGRVLVDGKEIYVAKDLKVGLFQDTSAF</sequence>
<comment type="function">
    <text evidence="1">Necessary for the introduction of cis unsaturation into fatty acids. Catalyzes the dehydration of (3R)-3-hydroxydecanoyl-ACP to E-(2)-decenoyl-ACP and then its isomerization to Z-(3)-decenoyl-ACP. Can catalyze the dehydratase reaction for beta-hydroxyacyl-ACPs with saturated chain lengths up to 16:0, being most active on intermediate chain length.</text>
</comment>
<comment type="catalytic activity">
    <reaction evidence="1">
        <text>a (3R)-hydroxyacyl-[ACP] = a (2E)-enoyl-[ACP] + H2O</text>
        <dbReference type="Rhea" id="RHEA:13097"/>
        <dbReference type="Rhea" id="RHEA-COMP:9925"/>
        <dbReference type="Rhea" id="RHEA-COMP:9945"/>
        <dbReference type="ChEBI" id="CHEBI:15377"/>
        <dbReference type="ChEBI" id="CHEBI:78784"/>
        <dbReference type="ChEBI" id="CHEBI:78827"/>
        <dbReference type="EC" id="4.2.1.59"/>
    </reaction>
</comment>
<comment type="catalytic activity">
    <reaction evidence="1">
        <text>(3R)-hydroxydecanoyl-[ACP] = (2E)-decenoyl-[ACP] + H2O</text>
        <dbReference type="Rhea" id="RHEA:41860"/>
        <dbReference type="Rhea" id="RHEA-COMP:9638"/>
        <dbReference type="Rhea" id="RHEA-COMP:9639"/>
        <dbReference type="ChEBI" id="CHEBI:15377"/>
        <dbReference type="ChEBI" id="CHEBI:78466"/>
        <dbReference type="ChEBI" id="CHEBI:78467"/>
    </reaction>
</comment>
<comment type="catalytic activity">
    <reaction evidence="1">
        <text>(2E)-decenoyl-[ACP] = (3Z)-decenoyl-[ACP]</text>
        <dbReference type="Rhea" id="RHEA:23568"/>
        <dbReference type="Rhea" id="RHEA-COMP:9639"/>
        <dbReference type="Rhea" id="RHEA-COMP:9927"/>
        <dbReference type="ChEBI" id="CHEBI:78467"/>
        <dbReference type="ChEBI" id="CHEBI:78798"/>
        <dbReference type="EC" id="5.3.3.14"/>
    </reaction>
</comment>
<comment type="pathway">
    <text evidence="1">Lipid metabolism; fatty acid biosynthesis.</text>
</comment>
<comment type="subunit">
    <text evidence="1">Homodimer.</text>
</comment>
<comment type="subcellular location">
    <subcellularLocation>
        <location evidence="1">Cytoplasm</location>
    </subcellularLocation>
</comment>
<comment type="similarity">
    <text evidence="1">Belongs to the thioester dehydratase family. FabA subfamily.</text>
</comment>
<reference key="1">
    <citation type="journal article" date="2008" name="PLoS ONE">
        <title>A recalibrated molecular clock and independent origins for the cholera pandemic clones.</title>
        <authorList>
            <person name="Feng L."/>
            <person name="Reeves P.R."/>
            <person name="Lan R."/>
            <person name="Ren Y."/>
            <person name="Gao C."/>
            <person name="Zhou Z."/>
            <person name="Ren Y."/>
            <person name="Cheng J."/>
            <person name="Wang W."/>
            <person name="Wang J."/>
            <person name="Qian W."/>
            <person name="Li D."/>
            <person name="Wang L."/>
        </authorList>
    </citation>
    <scope>NUCLEOTIDE SEQUENCE [LARGE SCALE GENOMIC DNA]</scope>
    <source>
        <strain>M66-2</strain>
    </source>
</reference>